<organism>
    <name type="scientific">Pyrococcus horikoshii (strain ATCC 700860 / DSM 12428 / JCM 9974 / NBRC 100139 / OT-3)</name>
    <dbReference type="NCBI Taxonomy" id="70601"/>
    <lineage>
        <taxon>Archaea</taxon>
        <taxon>Methanobacteriati</taxon>
        <taxon>Methanobacteriota</taxon>
        <taxon>Thermococci</taxon>
        <taxon>Thermococcales</taxon>
        <taxon>Thermococcaceae</taxon>
        <taxon>Pyrococcus</taxon>
    </lineage>
</organism>
<gene>
    <name type="ordered locus">PH0010</name>
</gene>
<sequence length="206" mass="23623">MVFKIKDEWGEFLVRLARRAIEEYLKTGKEIEPPKDTPPELWEKMGVFVTLNRYNVPPQTALRGCIGFPTPIYPLVEATIKAAIYSAVDDPRFPPVKLEEMDNLVVEVSVLTPPELIEGPPEERPRKIKVGRDGLIVEKGIYSGLLLPQVPVEWGWDEEEFLAETCWKAGLPPDCWLDEDTKVYKFTAEIFEEEYPRGPIKRKPLV</sequence>
<keyword id="KW-0002">3D-structure</keyword>
<protein>
    <recommendedName>
        <fullName evidence="1">Protein PH0010</fullName>
    </recommendedName>
</protein>
<accession>O57770</accession>
<feature type="chain" id="PRO_0000142385" description="Protein PH0010">
    <location>
        <begin position="1"/>
        <end position="206"/>
    </location>
</feature>
<feature type="domain" description="AMMECR1" evidence="1">
    <location>
        <begin position="8"/>
        <end position="202"/>
    </location>
</feature>
<feature type="helix" evidence="2">
    <location>
        <begin position="7"/>
        <end position="27"/>
    </location>
</feature>
<feature type="helix" evidence="2">
    <location>
        <begin position="39"/>
        <end position="42"/>
    </location>
</feature>
<feature type="strand" evidence="2">
    <location>
        <begin position="46"/>
        <end position="53"/>
    </location>
</feature>
<feature type="helix" evidence="2">
    <location>
        <begin position="58"/>
        <end position="60"/>
    </location>
</feature>
<feature type="strand" evidence="2">
    <location>
        <begin position="62"/>
        <end position="71"/>
    </location>
</feature>
<feature type="helix" evidence="2">
    <location>
        <begin position="75"/>
        <end position="88"/>
    </location>
</feature>
<feature type="helix" evidence="2">
    <location>
        <begin position="98"/>
        <end position="103"/>
    </location>
</feature>
<feature type="strand" evidence="2">
    <location>
        <begin position="104"/>
        <end position="111"/>
    </location>
</feature>
<feature type="helix" evidence="2">
    <location>
        <begin position="121"/>
        <end position="127"/>
    </location>
</feature>
<feature type="turn" evidence="2">
    <location>
        <begin position="130"/>
        <end position="132"/>
    </location>
</feature>
<feature type="strand" evidence="2">
    <location>
        <begin position="134"/>
        <end position="139"/>
    </location>
</feature>
<feature type="strand" evidence="2">
    <location>
        <begin position="142"/>
        <end position="146"/>
    </location>
</feature>
<feature type="helix" evidence="2">
    <location>
        <begin position="149"/>
        <end position="154"/>
    </location>
</feature>
<feature type="helix" evidence="2">
    <location>
        <begin position="158"/>
        <end position="168"/>
    </location>
</feature>
<feature type="helix" evidence="2">
    <location>
        <begin position="175"/>
        <end position="177"/>
    </location>
</feature>
<feature type="strand" evidence="2">
    <location>
        <begin position="181"/>
        <end position="186"/>
    </location>
</feature>
<feature type="strand" evidence="2">
    <location>
        <begin position="188"/>
        <end position="195"/>
    </location>
</feature>
<feature type="strand" evidence="2">
    <location>
        <begin position="200"/>
        <end position="202"/>
    </location>
</feature>
<dbReference type="EMBL" id="BA000001">
    <property type="protein sequence ID" value="BAA29078.1"/>
    <property type="molecule type" value="Genomic_DNA"/>
</dbReference>
<dbReference type="PIR" id="G71218">
    <property type="entry name" value="G71218"/>
</dbReference>
<dbReference type="RefSeq" id="WP_010884130.1">
    <property type="nucleotide sequence ID" value="NC_000961.1"/>
</dbReference>
<dbReference type="PDB" id="1VAJ">
    <property type="method" value="X-ray"/>
    <property type="resolution" value="1.82 A"/>
    <property type="chains" value="A=1-206"/>
</dbReference>
<dbReference type="PDBsum" id="1VAJ"/>
<dbReference type="SMR" id="O57770"/>
<dbReference type="STRING" id="70601.gene:9376917"/>
<dbReference type="EnsemblBacteria" id="BAA29078">
    <property type="protein sequence ID" value="BAA29078"/>
    <property type="gene ID" value="BAA29078"/>
</dbReference>
<dbReference type="GeneID" id="1443912"/>
<dbReference type="KEGG" id="pho:PH0010"/>
<dbReference type="eggNOG" id="arCOG01336">
    <property type="taxonomic scope" value="Archaea"/>
</dbReference>
<dbReference type="OrthoDB" id="25187at2157"/>
<dbReference type="EvolutionaryTrace" id="O57770"/>
<dbReference type="Proteomes" id="UP000000752">
    <property type="component" value="Chromosome"/>
</dbReference>
<dbReference type="Gene3D" id="3.30.700.20">
    <property type="entry name" value="Hypothetical protein ph0010, domain 1"/>
    <property type="match status" value="1"/>
</dbReference>
<dbReference type="Gene3D" id="3.30.1490.150">
    <property type="entry name" value="Hypothetical protein ph0010, domain 2"/>
    <property type="match status" value="1"/>
</dbReference>
<dbReference type="HAMAP" id="MF_00645">
    <property type="entry name" value="AMMECR1"/>
    <property type="match status" value="1"/>
</dbReference>
<dbReference type="InterPro" id="IPR023473">
    <property type="entry name" value="AMMECR1"/>
</dbReference>
<dbReference type="InterPro" id="IPR036071">
    <property type="entry name" value="AMMECR1_dom_sf"/>
</dbReference>
<dbReference type="InterPro" id="IPR002733">
    <property type="entry name" value="AMMECR1_domain"/>
</dbReference>
<dbReference type="InterPro" id="IPR027485">
    <property type="entry name" value="AMMECR1_N"/>
</dbReference>
<dbReference type="InterPro" id="IPR027623">
    <property type="entry name" value="AmmeMemoSam_A"/>
</dbReference>
<dbReference type="InterPro" id="IPR023472">
    <property type="entry name" value="Uncharacterised_MJ0810"/>
</dbReference>
<dbReference type="NCBIfam" id="TIGR04335">
    <property type="entry name" value="AmmeMemoSam_A"/>
    <property type="match status" value="1"/>
</dbReference>
<dbReference type="NCBIfam" id="NF002000">
    <property type="entry name" value="PRK00801.1"/>
    <property type="match status" value="1"/>
</dbReference>
<dbReference type="NCBIfam" id="TIGR00296">
    <property type="entry name" value="TIGR00296 family protein"/>
    <property type="match status" value="1"/>
</dbReference>
<dbReference type="PANTHER" id="PTHR13016:SF0">
    <property type="entry name" value="AMME SYNDROME CANDIDATE GENE 1 PROTEIN"/>
    <property type="match status" value="1"/>
</dbReference>
<dbReference type="PANTHER" id="PTHR13016">
    <property type="entry name" value="AMMECR1 HOMOLOG"/>
    <property type="match status" value="1"/>
</dbReference>
<dbReference type="Pfam" id="PF01871">
    <property type="entry name" value="AMMECR1"/>
    <property type="match status" value="1"/>
</dbReference>
<dbReference type="SUPFAM" id="SSF143447">
    <property type="entry name" value="AMMECR1-like"/>
    <property type="match status" value="1"/>
</dbReference>
<dbReference type="PROSITE" id="PS51112">
    <property type="entry name" value="AMMECR1"/>
    <property type="match status" value="1"/>
</dbReference>
<reference key="1">
    <citation type="journal article" date="1998" name="DNA Res.">
        <title>Complete sequence and gene organization of the genome of a hyper-thermophilic archaebacterium, Pyrococcus horikoshii OT3.</title>
        <authorList>
            <person name="Kawarabayasi Y."/>
            <person name="Sawada M."/>
            <person name="Horikawa H."/>
            <person name="Haikawa Y."/>
            <person name="Hino Y."/>
            <person name="Yamamoto S."/>
            <person name="Sekine M."/>
            <person name="Baba S."/>
            <person name="Kosugi H."/>
            <person name="Hosoyama A."/>
            <person name="Nagai Y."/>
            <person name="Sakai M."/>
            <person name="Ogura K."/>
            <person name="Otsuka R."/>
            <person name="Nakazawa H."/>
            <person name="Takamiya M."/>
            <person name="Ohfuku Y."/>
            <person name="Funahashi T."/>
            <person name="Tanaka T."/>
            <person name="Kudoh Y."/>
            <person name="Yamazaki J."/>
            <person name="Kushida N."/>
            <person name="Oguchi A."/>
            <person name="Aoki K."/>
            <person name="Yoshizawa T."/>
            <person name="Nakamura Y."/>
            <person name="Robb F.T."/>
            <person name="Horikoshi K."/>
            <person name="Masuchi Y."/>
            <person name="Shizuya H."/>
            <person name="Kikuchi H."/>
        </authorList>
    </citation>
    <scope>NUCLEOTIDE SEQUENCE [LARGE SCALE GENOMIC DNA]</scope>
    <source>
        <strain>ATCC 700860 / DSM 12428 / JCM 9974 / NBRC 100139 / OT-3</strain>
    </source>
</reference>
<name>Y010_PYRHO</name>
<evidence type="ECO:0000255" key="1">
    <source>
        <dbReference type="HAMAP-Rule" id="MF_00645"/>
    </source>
</evidence>
<evidence type="ECO:0007829" key="2">
    <source>
        <dbReference type="PDB" id="1VAJ"/>
    </source>
</evidence>
<proteinExistence type="evidence at protein level"/>